<organism>
    <name type="scientific">Pseudothermotoga lettingae (strain ATCC BAA-301 / DSM 14385 / NBRC 107922 / TMO)</name>
    <name type="common">Thermotoga lettingae</name>
    <dbReference type="NCBI Taxonomy" id="416591"/>
    <lineage>
        <taxon>Bacteria</taxon>
        <taxon>Thermotogati</taxon>
        <taxon>Thermotogota</taxon>
        <taxon>Thermotogae</taxon>
        <taxon>Thermotogales</taxon>
        <taxon>Thermotogaceae</taxon>
        <taxon>Pseudothermotoga</taxon>
    </lineage>
</organism>
<keyword id="KW-0342">GTP-binding</keyword>
<keyword id="KW-0547">Nucleotide-binding</keyword>
<keyword id="KW-1185">Reference proteome</keyword>
<keyword id="KW-0677">Repeat</keyword>
<keyword id="KW-0690">Ribosome biogenesis</keyword>
<feature type="chain" id="PRO_1000058528" description="GTPase Der">
    <location>
        <begin position="1"/>
        <end position="435"/>
    </location>
</feature>
<feature type="domain" description="EngA-type G 1">
    <location>
        <begin position="2"/>
        <end position="167"/>
    </location>
</feature>
<feature type="domain" description="EngA-type G 2">
    <location>
        <begin position="178"/>
        <end position="351"/>
    </location>
</feature>
<feature type="domain" description="KH-like" evidence="1">
    <location>
        <begin position="352"/>
        <end position="435"/>
    </location>
</feature>
<feature type="binding site" evidence="1">
    <location>
        <begin position="8"/>
        <end position="15"/>
    </location>
    <ligand>
        <name>GTP</name>
        <dbReference type="ChEBI" id="CHEBI:37565"/>
        <label>1</label>
    </ligand>
</feature>
<feature type="binding site" evidence="1">
    <location>
        <begin position="55"/>
        <end position="59"/>
    </location>
    <ligand>
        <name>GTP</name>
        <dbReference type="ChEBI" id="CHEBI:37565"/>
        <label>1</label>
    </ligand>
</feature>
<feature type="binding site" evidence="1">
    <location>
        <begin position="118"/>
        <end position="121"/>
    </location>
    <ligand>
        <name>GTP</name>
        <dbReference type="ChEBI" id="CHEBI:37565"/>
        <label>1</label>
    </ligand>
</feature>
<feature type="binding site" evidence="1">
    <location>
        <begin position="184"/>
        <end position="191"/>
    </location>
    <ligand>
        <name>GTP</name>
        <dbReference type="ChEBI" id="CHEBI:37565"/>
        <label>2</label>
    </ligand>
</feature>
<feature type="binding site" evidence="1">
    <location>
        <begin position="231"/>
        <end position="235"/>
    </location>
    <ligand>
        <name>GTP</name>
        <dbReference type="ChEBI" id="CHEBI:37565"/>
        <label>2</label>
    </ligand>
</feature>
<feature type="binding site" evidence="1">
    <location>
        <begin position="297"/>
        <end position="300"/>
    </location>
    <ligand>
        <name>GTP</name>
        <dbReference type="ChEBI" id="CHEBI:37565"/>
        <label>2</label>
    </ligand>
</feature>
<sequence>MATVVIAGRANVGKSTLFNRLIGRRKAITEKIEGVTRDIIKGLVVYNETSFLLYDTCGVFESTRDPVLLAMRDKAFEAFRKADLILFVVDGRSGITSEDEYVAQQLRKIAKKVLMVINKSENMSVVEKNLPDIMKLGFAEYIPVSAQHGNNIDELLDKITNLLRESGEKSMLFKESSPKIAIVGKPNVGKSSLFNALLNMDRATVTPVPGTTRDPVDEMIEINGKKYILVDTAGMRRKSRIERKTIEQFSISRTIDTIQSADVVLLVIDATEGVTRQDKRIADLILSSGRAMVCVINKFDLVNVRKKDYEAALFTEMPFINFCRIVFTSAVKKSGLEKLFNAIDEAYESYCRKVPQQLLSKLASQLPLLSPALSRKNLRIYSIKQIKIKPPKFVIMVNKKELTDYQTEKTLQRFIRERVDQFTGTPLVIEFKSRR</sequence>
<proteinExistence type="inferred from homology"/>
<evidence type="ECO:0000255" key="1">
    <source>
        <dbReference type="HAMAP-Rule" id="MF_00195"/>
    </source>
</evidence>
<accession>A8F7S2</accession>
<name>DER_PSELT</name>
<reference key="1">
    <citation type="submission" date="2007-08" db="EMBL/GenBank/DDBJ databases">
        <title>Complete sequence of Thermotoga lettingae TMO.</title>
        <authorList>
            <consortium name="US DOE Joint Genome Institute"/>
            <person name="Copeland A."/>
            <person name="Lucas S."/>
            <person name="Lapidus A."/>
            <person name="Barry K."/>
            <person name="Glavina del Rio T."/>
            <person name="Dalin E."/>
            <person name="Tice H."/>
            <person name="Pitluck S."/>
            <person name="Foster B."/>
            <person name="Bruce D."/>
            <person name="Schmutz J."/>
            <person name="Larimer F."/>
            <person name="Land M."/>
            <person name="Hauser L."/>
            <person name="Kyrpides N."/>
            <person name="Mikhailova N."/>
            <person name="Nelson K."/>
            <person name="Gogarten J.P."/>
            <person name="Noll K."/>
            <person name="Richardson P."/>
        </authorList>
    </citation>
    <scope>NUCLEOTIDE SEQUENCE [LARGE SCALE GENOMIC DNA]</scope>
    <source>
        <strain>ATCC BAA-301 / DSM 14385 / NBRC 107922 / TMO</strain>
    </source>
</reference>
<protein>
    <recommendedName>
        <fullName evidence="1">GTPase Der</fullName>
    </recommendedName>
    <alternativeName>
        <fullName evidence="1">GTP-binding protein EngA</fullName>
    </alternativeName>
</protein>
<dbReference type="EMBL" id="CP000812">
    <property type="protein sequence ID" value="ABV34206.1"/>
    <property type="molecule type" value="Genomic_DNA"/>
</dbReference>
<dbReference type="RefSeq" id="WP_012003682.1">
    <property type="nucleotide sequence ID" value="NZ_BSDV01000001.1"/>
</dbReference>
<dbReference type="SMR" id="A8F7S2"/>
<dbReference type="STRING" id="416591.Tlet_1652"/>
<dbReference type="KEGG" id="tle:Tlet_1652"/>
<dbReference type="eggNOG" id="COG1160">
    <property type="taxonomic scope" value="Bacteria"/>
</dbReference>
<dbReference type="HOGENOM" id="CLU_016077_6_2_0"/>
<dbReference type="OrthoDB" id="9805918at2"/>
<dbReference type="Proteomes" id="UP000002016">
    <property type="component" value="Chromosome"/>
</dbReference>
<dbReference type="GO" id="GO:0005525">
    <property type="term" value="F:GTP binding"/>
    <property type="evidence" value="ECO:0007669"/>
    <property type="project" value="UniProtKB-UniRule"/>
</dbReference>
<dbReference type="GO" id="GO:0043022">
    <property type="term" value="F:ribosome binding"/>
    <property type="evidence" value="ECO:0007669"/>
    <property type="project" value="TreeGrafter"/>
</dbReference>
<dbReference type="GO" id="GO:0042254">
    <property type="term" value="P:ribosome biogenesis"/>
    <property type="evidence" value="ECO:0007669"/>
    <property type="project" value="UniProtKB-KW"/>
</dbReference>
<dbReference type="CDD" id="cd01894">
    <property type="entry name" value="EngA1"/>
    <property type="match status" value="1"/>
</dbReference>
<dbReference type="CDD" id="cd01895">
    <property type="entry name" value="EngA2"/>
    <property type="match status" value="1"/>
</dbReference>
<dbReference type="FunFam" id="3.40.50.300:FF:000040">
    <property type="entry name" value="GTPase Der"/>
    <property type="match status" value="1"/>
</dbReference>
<dbReference type="Gene3D" id="3.30.300.20">
    <property type="match status" value="1"/>
</dbReference>
<dbReference type="Gene3D" id="3.40.50.300">
    <property type="entry name" value="P-loop containing nucleotide triphosphate hydrolases"/>
    <property type="match status" value="2"/>
</dbReference>
<dbReference type="HAMAP" id="MF_00195">
    <property type="entry name" value="GTPase_Der"/>
    <property type="match status" value="1"/>
</dbReference>
<dbReference type="InterPro" id="IPR031166">
    <property type="entry name" value="G_ENGA"/>
</dbReference>
<dbReference type="InterPro" id="IPR006073">
    <property type="entry name" value="GTP-bd"/>
</dbReference>
<dbReference type="InterPro" id="IPR016484">
    <property type="entry name" value="GTPase_Der"/>
</dbReference>
<dbReference type="InterPro" id="IPR032859">
    <property type="entry name" value="KH_dom-like"/>
</dbReference>
<dbReference type="InterPro" id="IPR015946">
    <property type="entry name" value="KH_dom-like_a/b"/>
</dbReference>
<dbReference type="InterPro" id="IPR027417">
    <property type="entry name" value="P-loop_NTPase"/>
</dbReference>
<dbReference type="InterPro" id="IPR005225">
    <property type="entry name" value="Small_GTP-bd"/>
</dbReference>
<dbReference type="NCBIfam" id="TIGR03594">
    <property type="entry name" value="GTPase_EngA"/>
    <property type="match status" value="1"/>
</dbReference>
<dbReference type="NCBIfam" id="TIGR00231">
    <property type="entry name" value="small_GTP"/>
    <property type="match status" value="2"/>
</dbReference>
<dbReference type="PANTHER" id="PTHR43834">
    <property type="entry name" value="GTPASE DER"/>
    <property type="match status" value="1"/>
</dbReference>
<dbReference type="PANTHER" id="PTHR43834:SF6">
    <property type="entry name" value="GTPASE DER"/>
    <property type="match status" value="1"/>
</dbReference>
<dbReference type="Pfam" id="PF14714">
    <property type="entry name" value="KH_dom-like"/>
    <property type="match status" value="1"/>
</dbReference>
<dbReference type="Pfam" id="PF01926">
    <property type="entry name" value="MMR_HSR1"/>
    <property type="match status" value="2"/>
</dbReference>
<dbReference type="PIRSF" id="PIRSF006485">
    <property type="entry name" value="GTP-binding_EngA"/>
    <property type="match status" value="1"/>
</dbReference>
<dbReference type="PRINTS" id="PR00326">
    <property type="entry name" value="GTP1OBG"/>
</dbReference>
<dbReference type="SUPFAM" id="SSF52540">
    <property type="entry name" value="P-loop containing nucleoside triphosphate hydrolases"/>
    <property type="match status" value="1"/>
</dbReference>
<dbReference type="SUPFAM" id="SSF82653">
    <property type="entry name" value="Probable GTPase Der, C-terminal domain"/>
    <property type="match status" value="1"/>
</dbReference>
<dbReference type="PROSITE" id="PS51712">
    <property type="entry name" value="G_ENGA"/>
    <property type="match status" value="2"/>
</dbReference>
<comment type="function">
    <text evidence="1">GTPase that plays an essential role in the late steps of ribosome biogenesis.</text>
</comment>
<comment type="subunit">
    <text evidence="1">Associates with the 50S ribosomal subunit.</text>
</comment>
<comment type="similarity">
    <text evidence="1">Belongs to the TRAFAC class TrmE-Era-EngA-EngB-Septin-like GTPase superfamily. EngA (Der) GTPase family.</text>
</comment>
<gene>
    <name evidence="1" type="primary">der</name>
    <name type="synonym">engA</name>
    <name type="ordered locus">Tlet_1652</name>
</gene>